<protein>
    <recommendedName>
        <fullName evidence="1">Methylglyoxal synthase</fullName>
        <shortName evidence="1">MGS</shortName>
        <ecNumber evidence="1">4.2.3.3</ecNumber>
    </recommendedName>
</protein>
<organism>
    <name type="scientific">Vibrio vulnificus (strain CMCP6)</name>
    <dbReference type="NCBI Taxonomy" id="216895"/>
    <lineage>
        <taxon>Bacteria</taxon>
        <taxon>Pseudomonadati</taxon>
        <taxon>Pseudomonadota</taxon>
        <taxon>Gammaproteobacteria</taxon>
        <taxon>Vibrionales</taxon>
        <taxon>Vibrionaceae</taxon>
        <taxon>Vibrio</taxon>
    </lineage>
</organism>
<sequence>MQKTTRTMPAHKHIALVAHDNYKPELLRWVKENKEKLQSHFLYATGTTGHMLSRETGLAIKSMISGPMGGDQQLGALISEGKIDMLIFFWDPLNAVPHDPDVKALLRIASVWNIPVATNRATAKFLFESPLLNEEVDVEIPDYQAYLAGRT</sequence>
<keyword id="KW-0456">Lyase</keyword>
<evidence type="ECO:0000255" key="1">
    <source>
        <dbReference type="HAMAP-Rule" id="MF_00549"/>
    </source>
</evidence>
<feature type="chain" id="PRO_0000178654" description="Methylglyoxal synthase">
    <location>
        <begin position="1"/>
        <end position="151"/>
    </location>
</feature>
<feature type="domain" description="MGS-like" evidence="1">
    <location>
        <begin position="6"/>
        <end position="151"/>
    </location>
</feature>
<feature type="active site" description="Proton donor/acceptor" evidence="1">
    <location>
        <position position="71"/>
    </location>
</feature>
<feature type="binding site" evidence="1">
    <location>
        <position position="19"/>
    </location>
    <ligand>
        <name>substrate</name>
    </ligand>
</feature>
<feature type="binding site" evidence="1">
    <location>
        <position position="23"/>
    </location>
    <ligand>
        <name>substrate</name>
    </ligand>
</feature>
<feature type="binding site" evidence="1">
    <location>
        <begin position="45"/>
        <end position="48"/>
    </location>
    <ligand>
        <name>substrate</name>
    </ligand>
</feature>
<feature type="binding site" evidence="1">
    <location>
        <begin position="65"/>
        <end position="66"/>
    </location>
    <ligand>
        <name>substrate</name>
    </ligand>
</feature>
<feature type="binding site" evidence="1">
    <location>
        <position position="98"/>
    </location>
    <ligand>
        <name>substrate</name>
    </ligand>
</feature>
<comment type="function">
    <text evidence="1">Catalyzes the formation of methylglyoxal from dihydroxyacetone phosphate.</text>
</comment>
<comment type="catalytic activity">
    <reaction evidence="1">
        <text>dihydroxyacetone phosphate = methylglyoxal + phosphate</text>
        <dbReference type="Rhea" id="RHEA:17937"/>
        <dbReference type="ChEBI" id="CHEBI:17158"/>
        <dbReference type="ChEBI" id="CHEBI:43474"/>
        <dbReference type="ChEBI" id="CHEBI:57642"/>
        <dbReference type="EC" id="4.2.3.3"/>
    </reaction>
</comment>
<comment type="similarity">
    <text evidence="1">Belongs to the methylglyoxal synthase family.</text>
</comment>
<accession>Q8D7M9</accession>
<gene>
    <name evidence="1" type="primary">mgsA</name>
    <name type="ordered locus">VV2_0123</name>
</gene>
<reference key="1">
    <citation type="submission" date="2002-12" db="EMBL/GenBank/DDBJ databases">
        <title>Complete genome sequence of Vibrio vulnificus CMCP6.</title>
        <authorList>
            <person name="Rhee J.H."/>
            <person name="Kim S.Y."/>
            <person name="Chung S.S."/>
            <person name="Kim J.J."/>
            <person name="Moon Y.H."/>
            <person name="Jeong H."/>
            <person name="Choy H.E."/>
        </authorList>
    </citation>
    <scope>NUCLEOTIDE SEQUENCE [LARGE SCALE GENOMIC DNA]</scope>
    <source>
        <strain>CMCP6</strain>
    </source>
</reference>
<name>MGSA_VIBVU</name>
<proteinExistence type="inferred from homology"/>
<dbReference type="EC" id="4.2.3.3" evidence="1"/>
<dbReference type="EMBL" id="AE016796">
    <property type="protein sequence ID" value="AAO07096.1"/>
    <property type="molecule type" value="Genomic_DNA"/>
</dbReference>
<dbReference type="RefSeq" id="WP_011081106.1">
    <property type="nucleotide sequence ID" value="NC_004460.2"/>
</dbReference>
<dbReference type="SMR" id="Q8D7M9"/>
<dbReference type="KEGG" id="vvu:VV2_0123"/>
<dbReference type="HOGENOM" id="CLU_120420_0_1_6"/>
<dbReference type="Proteomes" id="UP000002275">
    <property type="component" value="Chromosome 2"/>
</dbReference>
<dbReference type="GO" id="GO:0005829">
    <property type="term" value="C:cytosol"/>
    <property type="evidence" value="ECO:0007669"/>
    <property type="project" value="TreeGrafter"/>
</dbReference>
<dbReference type="GO" id="GO:0008929">
    <property type="term" value="F:methylglyoxal synthase activity"/>
    <property type="evidence" value="ECO:0007669"/>
    <property type="project" value="UniProtKB-UniRule"/>
</dbReference>
<dbReference type="GO" id="GO:0019242">
    <property type="term" value="P:methylglyoxal biosynthetic process"/>
    <property type="evidence" value="ECO:0007669"/>
    <property type="project" value="UniProtKB-UniRule"/>
</dbReference>
<dbReference type="CDD" id="cd01422">
    <property type="entry name" value="MGS"/>
    <property type="match status" value="1"/>
</dbReference>
<dbReference type="FunFam" id="3.40.50.1380:FF:000002">
    <property type="entry name" value="Methylglyoxal synthase"/>
    <property type="match status" value="1"/>
</dbReference>
<dbReference type="Gene3D" id="3.40.50.1380">
    <property type="entry name" value="Methylglyoxal synthase-like domain"/>
    <property type="match status" value="1"/>
</dbReference>
<dbReference type="HAMAP" id="MF_00549">
    <property type="entry name" value="Methylglyoxal_synth"/>
    <property type="match status" value="1"/>
</dbReference>
<dbReference type="InterPro" id="IPR004363">
    <property type="entry name" value="Methylgl_synth"/>
</dbReference>
<dbReference type="InterPro" id="IPR018148">
    <property type="entry name" value="Methylglyoxal_synth_AS"/>
</dbReference>
<dbReference type="InterPro" id="IPR011607">
    <property type="entry name" value="MGS-like_dom"/>
</dbReference>
<dbReference type="InterPro" id="IPR036914">
    <property type="entry name" value="MGS-like_dom_sf"/>
</dbReference>
<dbReference type="NCBIfam" id="TIGR00160">
    <property type="entry name" value="MGSA"/>
    <property type="match status" value="1"/>
</dbReference>
<dbReference type="NCBIfam" id="NF003559">
    <property type="entry name" value="PRK05234.1"/>
    <property type="match status" value="1"/>
</dbReference>
<dbReference type="PANTHER" id="PTHR30492">
    <property type="entry name" value="METHYLGLYOXAL SYNTHASE"/>
    <property type="match status" value="1"/>
</dbReference>
<dbReference type="PANTHER" id="PTHR30492:SF0">
    <property type="entry name" value="METHYLGLYOXAL SYNTHASE"/>
    <property type="match status" value="1"/>
</dbReference>
<dbReference type="Pfam" id="PF02142">
    <property type="entry name" value="MGS"/>
    <property type="match status" value="1"/>
</dbReference>
<dbReference type="PIRSF" id="PIRSF006614">
    <property type="entry name" value="Methylglyox_syn"/>
    <property type="match status" value="1"/>
</dbReference>
<dbReference type="SMART" id="SM00851">
    <property type="entry name" value="MGS"/>
    <property type="match status" value="1"/>
</dbReference>
<dbReference type="SUPFAM" id="SSF52335">
    <property type="entry name" value="Methylglyoxal synthase-like"/>
    <property type="match status" value="1"/>
</dbReference>
<dbReference type="PROSITE" id="PS01335">
    <property type="entry name" value="METHYLGLYOXAL_SYNTH"/>
    <property type="match status" value="1"/>
</dbReference>
<dbReference type="PROSITE" id="PS51855">
    <property type="entry name" value="MGS"/>
    <property type="match status" value="1"/>
</dbReference>